<dbReference type="EMBL" id="AE000516">
    <property type="protein sequence ID" value="AAK47319.1"/>
    <property type="molecule type" value="Genomic_DNA"/>
</dbReference>
<dbReference type="PIR" id="C70748">
    <property type="entry name" value="C70748"/>
</dbReference>
<dbReference type="RefSeq" id="WP_003414812.1">
    <property type="nucleotide sequence ID" value="NZ_KK341227.1"/>
</dbReference>
<dbReference type="SMR" id="P9WL18"/>
<dbReference type="KEGG" id="mtc:MT2992"/>
<dbReference type="PATRIC" id="fig|83331.31.peg.3233"/>
<dbReference type="HOGENOM" id="CLU_114057_0_0_11"/>
<dbReference type="Proteomes" id="UP000001020">
    <property type="component" value="Chromosome"/>
</dbReference>
<dbReference type="Gene3D" id="3.30.300.20">
    <property type="match status" value="1"/>
</dbReference>
<dbReference type="InterPro" id="IPR015946">
    <property type="entry name" value="KH_dom-like_a/b"/>
</dbReference>
<dbReference type="InterPro" id="IPR003718">
    <property type="entry name" value="OsmC/Ohr_fam"/>
</dbReference>
<dbReference type="InterPro" id="IPR036102">
    <property type="entry name" value="OsmC/Ohrsf"/>
</dbReference>
<dbReference type="Pfam" id="PF02566">
    <property type="entry name" value="OsmC"/>
    <property type="match status" value="1"/>
</dbReference>
<dbReference type="SUPFAM" id="SSF82784">
    <property type="entry name" value="OsmC-like"/>
    <property type="match status" value="1"/>
</dbReference>
<keyword id="KW-1185">Reference proteome</keyword>
<reference key="1">
    <citation type="journal article" date="2002" name="J. Bacteriol.">
        <title>Whole-genome comparison of Mycobacterium tuberculosis clinical and laboratory strains.</title>
        <authorList>
            <person name="Fleischmann R.D."/>
            <person name="Alland D."/>
            <person name="Eisen J.A."/>
            <person name="Carpenter L."/>
            <person name="White O."/>
            <person name="Peterson J.D."/>
            <person name="DeBoy R.T."/>
            <person name="Dodson R.J."/>
            <person name="Gwinn M.L."/>
            <person name="Haft D.H."/>
            <person name="Hickey E.K."/>
            <person name="Kolonay J.F."/>
            <person name="Nelson W.C."/>
            <person name="Umayam L.A."/>
            <person name="Ermolaeva M.D."/>
            <person name="Salzberg S.L."/>
            <person name="Delcher A."/>
            <person name="Utterback T.R."/>
            <person name="Weidman J.F."/>
            <person name="Khouri H.M."/>
            <person name="Gill J."/>
            <person name="Mikula A."/>
            <person name="Bishai W."/>
            <person name="Jacobs W.R. Jr."/>
            <person name="Venter J.C."/>
            <person name="Fraser C.M."/>
        </authorList>
    </citation>
    <scope>NUCLEOTIDE SEQUENCE [LARGE SCALE GENOMIC DNA]</scope>
    <source>
        <strain>CDC 1551 / Oshkosh</strain>
    </source>
</reference>
<sequence length="137" mass="14854">MTQLWVERTGTRRYIGRSTRGAQVLVGSEDVDGVFTPGELLKIALAACSGMASDQPLARRLGDDYQAVVKVSGAADRDQERYPLIEETMELDLSGLTEDEKERLLVVINRAVELACTVGRTLKSGTTVNLEVVDVGA</sequence>
<proteinExistence type="predicted"/>
<feature type="chain" id="PRO_0000427556" description="Uncharacterized protein MT2992">
    <location>
        <begin position="1"/>
        <end position="137"/>
    </location>
</feature>
<protein>
    <recommendedName>
        <fullName>Uncharacterized protein MT2992</fullName>
    </recommendedName>
</protein>
<gene>
    <name type="ordered locus">MT2992</name>
</gene>
<accession>P9WL18</accession>
<accession>L0TB99</accession>
<accession>P65055</accession>
<accession>Q10971</accession>
<name>Y2923_MYCTO</name>
<organism>
    <name type="scientific">Mycobacterium tuberculosis (strain CDC 1551 / Oshkosh)</name>
    <dbReference type="NCBI Taxonomy" id="83331"/>
    <lineage>
        <taxon>Bacteria</taxon>
        <taxon>Bacillati</taxon>
        <taxon>Actinomycetota</taxon>
        <taxon>Actinomycetes</taxon>
        <taxon>Mycobacteriales</taxon>
        <taxon>Mycobacteriaceae</taxon>
        <taxon>Mycobacterium</taxon>
        <taxon>Mycobacterium tuberculosis complex</taxon>
    </lineage>
</organism>